<keyword id="KW-0131">Cell cycle</keyword>
<keyword id="KW-0132">Cell division</keyword>
<keyword id="KW-0159">Chromosome partition</keyword>
<keyword id="KW-0963">Cytoplasm</keyword>
<keyword id="KW-0229">DNA integration</keyword>
<keyword id="KW-0233">DNA recombination</keyword>
<keyword id="KW-0238">DNA-binding</keyword>
<keyword id="KW-1185">Reference proteome</keyword>
<accession>Q9CBU0</accession>
<accession>O33037</accession>
<evidence type="ECO:0000255" key="1">
    <source>
        <dbReference type="HAMAP-Rule" id="MF_01808"/>
    </source>
</evidence>
<evidence type="ECO:0000255" key="2">
    <source>
        <dbReference type="PROSITE-ProRule" id="PRU01246"/>
    </source>
</evidence>
<evidence type="ECO:0000255" key="3">
    <source>
        <dbReference type="PROSITE-ProRule" id="PRU01248"/>
    </source>
</evidence>
<evidence type="ECO:0000305" key="4"/>
<dbReference type="EMBL" id="Z97369">
    <property type="protein sequence ID" value="CAB10656.1"/>
    <property type="status" value="ALT_INIT"/>
    <property type="molecule type" value="Genomic_DNA"/>
</dbReference>
<dbReference type="EMBL" id="AL583922">
    <property type="protein sequence ID" value="CAC30551.1"/>
    <property type="molecule type" value="Genomic_DNA"/>
</dbReference>
<dbReference type="PIR" id="B87109">
    <property type="entry name" value="B87109"/>
</dbReference>
<dbReference type="RefSeq" id="NP_302102.1">
    <property type="nucleotide sequence ID" value="NC_002677.1"/>
</dbReference>
<dbReference type="RefSeq" id="WP_010908423.1">
    <property type="nucleotide sequence ID" value="NC_002677.1"/>
</dbReference>
<dbReference type="SMR" id="Q9CBU0"/>
<dbReference type="STRING" id="272631.gene:17575441"/>
<dbReference type="KEGG" id="mle:ML1600"/>
<dbReference type="PATRIC" id="fig|272631.5.peg.3013"/>
<dbReference type="Leproma" id="ML1600"/>
<dbReference type="eggNOG" id="COG4974">
    <property type="taxonomic scope" value="Bacteria"/>
</dbReference>
<dbReference type="HOGENOM" id="CLU_027562_9_0_11"/>
<dbReference type="OrthoDB" id="9801717at2"/>
<dbReference type="Proteomes" id="UP000000806">
    <property type="component" value="Chromosome"/>
</dbReference>
<dbReference type="GO" id="GO:0005737">
    <property type="term" value="C:cytoplasm"/>
    <property type="evidence" value="ECO:0007669"/>
    <property type="project" value="UniProtKB-SubCell"/>
</dbReference>
<dbReference type="GO" id="GO:0003677">
    <property type="term" value="F:DNA binding"/>
    <property type="evidence" value="ECO:0007669"/>
    <property type="project" value="UniProtKB-KW"/>
</dbReference>
<dbReference type="GO" id="GO:0009037">
    <property type="term" value="F:tyrosine-based site-specific recombinase activity"/>
    <property type="evidence" value="ECO:0007669"/>
    <property type="project" value="UniProtKB-UniRule"/>
</dbReference>
<dbReference type="GO" id="GO:0051301">
    <property type="term" value="P:cell division"/>
    <property type="evidence" value="ECO:0007669"/>
    <property type="project" value="UniProtKB-KW"/>
</dbReference>
<dbReference type="GO" id="GO:0007059">
    <property type="term" value="P:chromosome segregation"/>
    <property type="evidence" value="ECO:0007669"/>
    <property type="project" value="UniProtKB-UniRule"/>
</dbReference>
<dbReference type="GO" id="GO:0006313">
    <property type="term" value="P:DNA transposition"/>
    <property type="evidence" value="ECO:0007669"/>
    <property type="project" value="UniProtKB-UniRule"/>
</dbReference>
<dbReference type="CDD" id="cd00798">
    <property type="entry name" value="INT_XerDC_C"/>
    <property type="match status" value="1"/>
</dbReference>
<dbReference type="Gene3D" id="1.10.150.130">
    <property type="match status" value="1"/>
</dbReference>
<dbReference type="Gene3D" id="1.10.443.10">
    <property type="entry name" value="Intergrase catalytic core"/>
    <property type="match status" value="1"/>
</dbReference>
<dbReference type="HAMAP" id="MF_01808">
    <property type="entry name" value="Recomb_XerC_XerD"/>
    <property type="match status" value="1"/>
</dbReference>
<dbReference type="InterPro" id="IPR044068">
    <property type="entry name" value="CB"/>
</dbReference>
<dbReference type="InterPro" id="IPR011010">
    <property type="entry name" value="DNA_brk_join_enz"/>
</dbReference>
<dbReference type="InterPro" id="IPR013762">
    <property type="entry name" value="Integrase-like_cat_sf"/>
</dbReference>
<dbReference type="InterPro" id="IPR002104">
    <property type="entry name" value="Integrase_catalytic"/>
</dbReference>
<dbReference type="InterPro" id="IPR010998">
    <property type="entry name" value="Integrase_recombinase_N"/>
</dbReference>
<dbReference type="InterPro" id="IPR004107">
    <property type="entry name" value="Integrase_SAM-like_N"/>
</dbReference>
<dbReference type="InterPro" id="IPR023009">
    <property type="entry name" value="Tyrosine_recombinase_XerC/XerD"/>
</dbReference>
<dbReference type="InterPro" id="IPR050090">
    <property type="entry name" value="Tyrosine_recombinase_XerCD"/>
</dbReference>
<dbReference type="PANTHER" id="PTHR30349">
    <property type="entry name" value="PHAGE INTEGRASE-RELATED"/>
    <property type="match status" value="1"/>
</dbReference>
<dbReference type="PANTHER" id="PTHR30349:SF77">
    <property type="entry name" value="TYROSINE RECOMBINASE XERC"/>
    <property type="match status" value="1"/>
</dbReference>
<dbReference type="Pfam" id="PF02899">
    <property type="entry name" value="Phage_int_SAM_1"/>
    <property type="match status" value="1"/>
</dbReference>
<dbReference type="Pfam" id="PF00589">
    <property type="entry name" value="Phage_integrase"/>
    <property type="match status" value="1"/>
</dbReference>
<dbReference type="SUPFAM" id="SSF56349">
    <property type="entry name" value="DNA breaking-rejoining enzymes"/>
    <property type="match status" value="1"/>
</dbReference>
<dbReference type="PROSITE" id="PS51900">
    <property type="entry name" value="CB"/>
    <property type="match status" value="1"/>
</dbReference>
<dbReference type="PROSITE" id="PS51898">
    <property type="entry name" value="TYR_RECOMBINASE"/>
    <property type="match status" value="1"/>
</dbReference>
<comment type="function">
    <text evidence="1">Site-specific tyrosine recombinase, which acts by catalyzing the cutting and rejoining of the recombining DNA molecules. The XerC-XerD complex is essential to convert dimers of the bacterial chromosome into monomers to permit their segregation at cell division. It also contributes to the segregational stability of plasmids.</text>
</comment>
<comment type="subunit">
    <text evidence="1">Forms a cyclic heterotetrameric complex composed of two molecules of XerC and two molecules of XerD.</text>
</comment>
<comment type="subcellular location">
    <subcellularLocation>
        <location evidence="1">Cytoplasm</location>
    </subcellularLocation>
</comment>
<comment type="similarity">
    <text evidence="1">Belongs to the 'phage' integrase family. XerC subfamily.</text>
</comment>
<comment type="sequence caution" evidence="4">
    <conflict type="erroneous initiation">
        <sequence resource="EMBL-CDS" id="CAB10656"/>
    </conflict>
</comment>
<sequence length="297" mass="32180">MAILDEFDEHLALRCGRSEHTRRAYLGDLRSLLTHLEGRGSRLDQLSLPVLRSWLATAAGAGAARTTLARRISAVKAFTAWAKWRGQLAADPAARLQVPRAYRTLPAVLRQDQALQIMAAAKSGAEQGDPLALRDRLIVEMLYATGIRVSELCGLDIDDVDTRHRLVRVLGKGNKQRTAPFGVPAADALRGWLDDGRPALVTVESGPALLLGSRGRRLDVRQARTVVHQTVAVVAGAPDMGPHGLRHSAATHLLEGGADLRVVQELLGHSSLATTQLYTHVAVSRLRVVHDQAHPRA</sequence>
<protein>
    <recommendedName>
        <fullName evidence="1">Tyrosine recombinase XerC</fullName>
    </recommendedName>
</protein>
<gene>
    <name evidence="1" type="primary">xerC</name>
    <name type="ordered locus">ML1600</name>
    <name type="ORF">MLCB250.62</name>
</gene>
<proteinExistence type="inferred from homology"/>
<name>XERC_MYCLE</name>
<reference key="1">
    <citation type="journal article" date="2001" name="Nature">
        <title>Massive gene decay in the leprosy bacillus.</title>
        <authorList>
            <person name="Cole S.T."/>
            <person name="Eiglmeier K."/>
            <person name="Parkhill J."/>
            <person name="James K.D."/>
            <person name="Thomson N.R."/>
            <person name="Wheeler P.R."/>
            <person name="Honore N."/>
            <person name="Garnier T."/>
            <person name="Churcher C.M."/>
            <person name="Harris D.E."/>
            <person name="Mungall K.L."/>
            <person name="Basham D."/>
            <person name="Brown D."/>
            <person name="Chillingworth T."/>
            <person name="Connor R."/>
            <person name="Davies R.M."/>
            <person name="Devlin K."/>
            <person name="Duthoy S."/>
            <person name="Feltwell T."/>
            <person name="Fraser A."/>
            <person name="Hamlin N."/>
            <person name="Holroyd S."/>
            <person name="Hornsby T."/>
            <person name="Jagels K."/>
            <person name="Lacroix C."/>
            <person name="Maclean J."/>
            <person name="Moule S."/>
            <person name="Murphy L.D."/>
            <person name="Oliver K."/>
            <person name="Quail M.A."/>
            <person name="Rajandream M.A."/>
            <person name="Rutherford K.M."/>
            <person name="Rutter S."/>
            <person name="Seeger K."/>
            <person name="Simon S."/>
            <person name="Simmonds M."/>
            <person name="Skelton J."/>
            <person name="Squares R."/>
            <person name="Squares S."/>
            <person name="Stevens K."/>
            <person name="Taylor K."/>
            <person name="Whitehead S."/>
            <person name="Woodward J.R."/>
            <person name="Barrell B.G."/>
        </authorList>
    </citation>
    <scope>NUCLEOTIDE SEQUENCE [LARGE SCALE GENOMIC DNA]</scope>
    <source>
        <strain>TN</strain>
    </source>
</reference>
<organism>
    <name type="scientific">Mycobacterium leprae (strain TN)</name>
    <dbReference type="NCBI Taxonomy" id="272631"/>
    <lineage>
        <taxon>Bacteria</taxon>
        <taxon>Bacillati</taxon>
        <taxon>Actinomycetota</taxon>
        <taxon>Actinomycetes</taxon>
        <taxon>Mycobacteriales</taxon>
        <taxon>Mycobacteriaceae</taxon>
        <taxon>Mycobacterium</taxon>
    </lineage>
</organism>
<feature type="chain" id="PRO_0000095305" description="Tyrosine recombinase XerC">
    <location>
        <begin position="1"/>
        <end position="297"/>
    </location>
</feature>
<feature type="domain" description="Core-binding (CB)" evidence="3">
    <location>
        <begin position="1"/>
        <end position="83"/>
    </location>
</feature>
<feature type="domain" description="Tyr recombinase" evidence="2">
    <location>
        <begin position="104"/>
        <end position="291"/>
    </location>
</feature>
<feature type="active site" evidence="1">
    <location>
        <position position="148"/>
    </location>
</feature>
<feature type="active site" evidence="1">
    <location>
        <position position="172"/>
    </location>
</feature>
<feature type="active site" evidence="1">
    <location>
        <position position="243"/>
    </location>
</feature>
<feature type="active site" evidence="1">
    <location>
        <position position="246"/>
    </location>
</feature>
<feature type="active site" evidence="1">
    <location>
        <position position="269"/>
    </location>
</feature>
<feature type="active site" description="O-(3'-phospho-DNA)-tyrosine intermediate" evidence="1">
    <location>
        <position position="278"/>
    </location>
</feature>